<protein>
    <recommendedName>
        <fullName evidence="2">Probable thioesterase PNKD</fullName>
        <ecNumber evidence="2">3.1.2.-</ecNumber>
    </recommendedName>
</protein>
<gene>
    <name type="primary">PNKD</name>
</gene>
<organism>
    <name type="scientific">Bos taurus</name>
    <name type="common">Bovine</name>
    <dbReference type="NCBI Taxonomy" id="9913"/>
    <lineage>
        <taxon>Eukaryota</taxon>
        <taxon>Metazoa</taxon>
        <taxon>Chordata</taxon>
        <taxon>Craniata</taxon>
        <taxon>Vertebrata</taxon>
        <taxon>Euteleostomi</taxon>
        <taxon>Mammalia</taxon>
        <taxon>Eutheria</taxon>
        <taxon>Laurasiatheria</taxon>
        <taxon>Artiodactyla</taxon>
        <taxon>Ruminantia</taxon>
        <taxon>Pecora</taxon>
        <taxon>Bovidae</taxon>
        <taxon>Bovinae</taxon>
        <taxon>Bos</taxon>
    </lineage>
</organism>
<proteinExistence type="evidence at transcript level"/>
<evidence type="ECO:0000250" key="1">
    <source>
        <dbReference type="UniProtKB" id="Q16775"/>
    </source>
</evidence>
<evidence type="ECO:0000250" key="2">
    <source>
        <dbReference type="UniProtKB" id="Q8N490"/>
    </source>
</evidence>
<evidence type="ECO:0000256" key="3">
    <source>
        <dbReference type="SAM" id="MobiDB-lite"/>
    </source>
</evidence>
<evidence type="ECO:0000305" key="4"/>
<name>PNKD_BOVIN</name>
<comment type="function">
    <text evidence="2">Probable thioesterase that may play a role in cellular detoxification processes; it likely acts on a yet-unknown alpha-hydroxythioester substrate. In vitro, it is able to catalyze the hydrolysis of S-D-lactoyl-glutathione to form glutathione and D-lactic acid at very low rate, though this reaction is not physiologically relevant in vivo.</text>
</comment>
<comment type="catalytic activity">
    <reaction evidence="2">
        <text>a thioester + H2O = a thiol + a carboxylate + H(+)</text>
        <dbReference type="Rhea" id="RHEA:82919"/>
        <dbReference type="ChEBI" id="CHEBI:15377"/>
        <dbReference type="ChEBI" id="CHEBI:15378"/>
        <dbReference type="ChEBI" id="CHEBI:29067"/>
        <dbReference type="ChEBI" id="CHEBI:29256"/>
        <dbReference type="ChEBI" id="CHEBI:51277"/>
    </reaction>
</comment>
<comment type="cofactor">
    <cofactor evidence="1">
        <name>Zn(2+)</name>
        <dbReference type="ChEBI" id="CHEBI:29105"/>
    </cofactor>
    <text evidence="1">Binds 2 Zn(2+) ions per subunit.</text>
</comment>
<comment type="subcellular location">
    <subcellularLocation>
        <location evidence="2">Cell membrane</location>
        <topology evidence="2">Peripheral membrane protein</topology>
    </subcellularLocation>
    <subcellularLocation>
        <location evidence="2">Mitochondrion</location>
    </subcellularLocation>
</comment>
<comment type="PTM">
    <text evidence="2">Undergoes cleavage at the N-terminus.</text>
</comment>
<comment type="similarity">
    <text evidence="4">Belongs to the metallo-beta-lactamase superfamily. Glyoxalase II family.</text>
</comment>
<reference key="1">
    <citation type="submission" date="2007-07" db="EMBL/GenBank/DDBJ databases">
        <authorList>
            <consortium name="NIH - Mammalian Gene Collection (MGC) project"/>
        </authorList>
    </citation>
    <scope>NUCLEOTIDE SEQUENCE [LARGE SCALE MRNA]</scope>
    <source>
        <strain>Hereford</strain>
        <tissue>Basal ganglia</tissue>
    </source>
</reference>
<sequence>MAAVVAATALKGRGARNARVLRGILSGATANKASQNRSRALQSHSSPECKEEPEPLSPELEYIPRKRGKNPMKAVGLAWYSLYTRTRLGYLFYRQQLRRARNRYPKGHSRTQPRLFNGVKVLPIPVLSDNYSYLIIDTQARLAVAVDPSDPQAVQASIEKEGVNLVAILCTHKHWDHSGGNRDLSRRHQDCRVYGSPQDSIPYLTHPLCHQDVVSVGRLQIRALATPGHTQGHLVYLLDGEPYEGPSCLFSGDLLFLSGCGRTFEGTAETMLSSLDTVLGLGDDTLLWPGHEYAEENLGFAGVVEPENLARERKMQWVQRQRMERKSTCPSTLGEERSYNPFLRTHCLVLQEALGPSPGPTGDDGCSRAQLLERLRQLKDLHKSK</sequence>
<feature type="chain" id="PRO_0000311124" description="Probable thioesterase PNKD">
    <location>
        <begin position="1"/>
        <end position="385"/>
    </location>
</feature>
<feature type="region of interest" description="Disordered" evidence="3">
    <location>
        <begin position="31"/>
        <end position="57"/>
    </location>
</feature>
<feature type="compositionally biased region" description="Polar residues" evidence="3">
    <location>
        <begin position="31"/>
        <end position="42"/>
    </location>
</feature>
<feature type="binding site" evidence="1">
    <location>
        <position position="172"/>
    </location>
    <ligand>
        <name>Zn(2+)</name>
        <dbReference type="ChEBI" id="CHEBI:29105"/>
        <label>1</label>
    </ligand>
</feature>
<feature type="binding site" evidence="1">
    <location>
        <position position="174"/>
    </location>
    <ligand>
        <name>Zn(2+)</name>
        <dbReference type="ChEBI" id="CHEBI:29105"/>
        <label>1</label>
    </ligand>
</feature>
<feature type="binding site" evidence="1">
    <location>
        <position position="176"/>
    </location>
    <ligand>
        <name>Zn(2+)</name>
        <dbReference type="ChEBI" id="CHEBI:29105"/>
        <label>2</label>
    </ligand>
</feature>
<feature type="binding site" evidence="1">
    <location>
        <position position="177"/>
    </location>
    <ligand>
        <name>Zn(2+)</name>
        <dbReference type="ChEBI" id="CHEBI:29105"/>
        <label>2</label>
    </ligand>
</feature>
<feature type="binding site" evidence="1">
    <location>
        <position position="229"/>
    </location>
    <ligand>
        <name>Zn(2+)</name>
        <dbReference type="ChEBI" id="CHEBI:29105"/>
        <label>1</label>
    </ligand>
</feature>
<feature type="binding site" evidence="1">
    <location>
        <position position="253"/>
    </location>
    <ligand>
        <name>Zn(2+)</name>
        <dbReference type="ChEBI" id="CHEBI:29105"/>
        <label>1</label>
    </ligand>
</feature>
<feature type="binding site" evidence="1">
    <location>
        <position position="253"/>
    </location>
    <ligand>
        <name>Zn(2+)</name>
        <dbReference type="ChEBI" id="CHEBI:29105"/>
        <label>2</label>
    </ligand>
</feature>
<feature type="binding site" evidence="1">
    <location>
        <position position="291"/>
    </location>
    <ligand>
        <name>Zn(2+)</name>
        <dbReference type="ChEBI" id="CHEBI:29105"/>
        <label>2</label>
    </ligand>
</feature>
<accession>A7YY46</accession>
<keyword id="KW-1003">Cell membrane</keyword>
<keyword id="KW-0378">Hydrolase</keyword>
<keyword id="KW-0472">Membrane</keyword>
<keyword id="KW-0479">Metal-binding</keyword>
<keyword id="KW-0496">Mitochondrion</keyword>
<keyword id="KW-1185">Reference proteome</keyword>
<keyword id="KW-0862">Zinc</keyword>
<dbReference type="EC" id="3.1.2.-" evidence="2"/>
<dbReference type="EMBL" id="BC151298">
    <property type="protein sequence ID" value="AAI51299.1"/>
    <property type="molecule type" value="mRNA"/>
</dbReference>
<dbReference type="RefSeq" id="NP_001107642.1">
    <property type="nucleotide sequence ID" value="NM_001114170.1"/>
</dbReference>
<dbReference type="SMR" id="A7YY46"/>
<dbReference type="FunCoup" id="A7YY46">
    <property type="interactions" value="106"/>
</dbReference>
<dbReference type="STRING" id="9913.ENSBTAP00000005141"/>
<dbReference type="PaxDb" id="9913-ENSBTAP00000005141"/>
<dbReference type="Ensembl" id="ENSBTAT00000125289.1">
    <property type="protein sequence ID" value="ENSBTAP00000083759.1"/>
    <property type="gene ID" value="ENSBTAG00000003936.7"/>
</dbReference>
<dbReference type="GeneID" id="616561"/>
<dbReference type="KEGG" id="bta:616561"/>
<dbReference type="CTD" id="25953"/>
<dbReference type="VGNC" id="VGNC:33080">
    <property type="gene designation" value="PNKD"/>
</dbReference>
<dbReference type="eggNOG" id="KOG0813">
    <property type="taxonomic scope" value="Eukaryota"/>
</dbReference>
<dbReference type="GeneTree" id="ENSGT00940000158887"/>
<dbReference type="HOGENOM" id="CLU_030571_4_3_1"/>
<dbReference type="InParanoid" id="A7YY46"/>
<dbReference type="OrthoDB" id="449487at2759"/>
<dbReference type="TreeFam" id="TF105273"/>
<dbReference type="Proteomes" id="UP000009136">
    <property type="component" value="Chromosome 2"/>
</dbReference>
<dbReference type="GO" id="GO:0005739">
    <property type="term" value="C:mitochondrion"/>
    <property type="evidence" value="ECO:0000318"/>
    <property type="project" value="GO_Central"/>
</dbReference>
<dbReference type="GO" id="GO:0005886">
    <property type="term" value="C:plasma membrane"/>
    <property type="evidence" value="ECO:0007669"/>
    <property type="project" value="UniProtKB-SubCell"/>
</dbReference>
<dbReference type="GO" id="GO:0004416">
    <property type="term" value="F:hydroxyacylglutathione hydrolase activity"/>
    <property type="evidence" value="ECO:0007669"/>
    <property type="project" value="InterPro"/>
</dbReference>
<dbReference type="GO" id="GO:0046872">
    <property type="term" value="F:metal ion binding"/>
    <property type="evidence" value="ECO:0007669"/>
    <property type="project" value="UniProtKB-KW"/>
</dbReference>
<dbReference type="GO" id="GO:0019243">
    <property type="term" value="P:methylglyoxal catabolic process to D-lactate via S-lactoyl-glutathione"/>
    <property type="evidence" value="ECO:0007669"/>
    <property type="project" value="InterPro"/>
</dbReference>
<dbReference type="CDD" id="cd07723">
    <property type="entry name" value="hydroxyacylglutathione_hydrolase_MBL-fold"/>
    <property type="match status" value="1"/>
</dbReference>
<dbReference type="FunFam" id="3.60.15.10:FF:000015">
    <property type="entry name" value="probable hydrolase PNKD isoform X1"/>
    <property type="match status" value="1"/>
</dbReference>
<dbReference type="Gene3D" id="3.60.15.10">
    <property type="entry name" value="Ribonuclease Z/Hydroxyacylglutathione hydrolase-like"/>
    <property type="match status" value="1"/>
</dbReference>
<dbReference type="HAMAP" id="MF_01374">
    <property type="entry name" value="Glyoxalase_2"/>
    <property type="match status" value="1"/>
</dbReference>
<dbReference type="InterPro" id="IPR035680">
    <property type="entry name" value="Clx_II_MBL"/>
</dbReference>
<dbReference type="InterPro" id="IPR032282">
    <property type="entry name" value="HAGH_C"/>
</dbReference>
<dbReference type="InterPro" id="IPR017782">
    <property type="entry name" value="Hydroxyacylglutathione_Hdrlase"/>
</dbReference>
<dbReference type="InterPro" id="IPR001279">
    <property type="entry name" value="Metallo-B-lactamas"/>
</dbReference>
<dbReference type="InterPro" id="IPR036866">
    <property type="entry name" value="RibonucZ/Hydroxyglut_hydro"/>
</dbReference>
<dbReference type="NCBIfam" id="TIGR03413">
    <property type="entry name" value="GSH_gloB"/>
    <property type="match status" value="1"/>
</dbReference>
<dbReference type="PANTHER" id="PTHR11935">
    <property type="entry name" value="BETA LACTAMASE DOMAIN"/>
    <property type="match status" value="1"/>
</dbReference>
<dbReference type="PANTHER" id="PTHR11935:SF116">
    <property type="entry name" value="HYDROLASE PNKD-RELATED"/>
    <property type="match status" value="1"/>
</dbReference>
<dbReference type="Pfam" id="PF16123">
    <property type="entry name" value="HAGH_C"/>
    <property type="match status" value="1"/>
</dbReference>
<dbReference type="Pfam" id="PF00753">
    <property type="entry name" value="Lactamase_B"/>
    <property type="match status" value="1"/>
</dbReference>
<dbReference type="SMART" id="SM00849">
    <property type="entry name" value="Lactamase_B"/>
    <property type="match status" value="1"/>
</dbReference>
<dbReference type="SUPFAM" id="SSF56281">
    <property type="entry name" value="Metallo-hydrolase/oxidoreductase"/>
    <property type="match status" value="1"/>
</dbReference>